<organism>
    <name type="scientific">Streptococcus pneumoniae serotype 4 (strain ATCC BAA-334 / TIGR4)</name>
    <dbReference type="NCBI Taxonomy" id="170187"/>
    <lineage>
        <taxon>Bacteria</taxon>
        <taxon>Bacillati</taxon>
        <taxon>Bacillota</taxon>
        <taxon>Bacilli</taxon>
        <taxon>Lactobacillales</taxon>
        <taxon>Streptococcaceae</taxon>
        <taxon>Streptococcus</taxon>
    </lineage>
</organism>
<accession>P65887</accession>
<accession>Q97TC1</accession>
<name>PURA_STRPN</name>
<protein>
    <recommendedName>
        <fullName evidence="1">Adenylosuccinate synthetase</fullName>
        <shortName evidence="1">AMPSase</shortName>
        <shortName evidence="1">AdSS</shortName>
        <ecNumber evidence="1">6.3.4.4</ecNumber>
    </recommendedName>
    <alternativeName>
        <fullName evidence="1">IMP--aspartate ligase</fullName>
    </alternativeName>
</protein>
<proteinExistence type="evidence at protein level"/>
<sequence length="428" mass="47570">MTSVVVVGTQWGDEGKGKITDFLSANAEVIARYQGGDNAGHTIVIDGKKFKLHLIPSGIFFPEKISVIGNGMVVNPKSLVKELSYLHEEGVTTDNLRISDRAHVILPYHIELDRLQEEAKGDNKIGTTIKGIGPAYMDKAARVGIRIADLLDKDIFRERLERNLAEKNRLFEKLYDSKAIVFDDIFEEYYEYGQQIKKYVIDTSVILNDALDNGKRVLFEGAQGVMLDIDQGTYPFVTSSNPVAGGVTIGSGVGPSKIDKVVGVCKAYTSRVGDGPFPTELFDEVGERIREVGHEYGTTTGRPRRVGWFDSVVMRHSRRVSGITNLSLNSIDVLSGLDTVKICVAYDLDGQRIDYYPASLEQLKRCKPIYEELPGWSEDITGVRNLEDLPENARNYVRRVSELVGVRISTFSVGPGREQTNILESVWS</sequence>
<keyword id="KW-0963">Cytoplasm</keyword>
<keyword id="KW-0342">GTP-binding</keyword>
<keyword id="KW-0436">Ligase</keyword>
<keyword id="KW-0460">Magnesium</keyword>
<keyword id="KW-0479">Metal-binding</keyword>
<keyword id="KW-0547">Nucleotide-binding</keyword>
<keyword id="KW-0658">Purine biosynthesis</keyword>
<keyword id="KW-1185">Reference proteome</keyword>
<dbReference type="EC" id="6.3.4.4" evidence="1"/>
<dbReference type="EMBL" id="AE005672">
    <property type="protein sequence ID" value="AAK74211.1"/>
    <property type="molecule type" value="Genomic_DNA"/>
</dbReference>
<dbReference type="PIR" id="B95002">
    <property type="entry name" value="B95002"/>
</dbReference>
<dbReference type="RefSeq" id="WP_000205044.1">
    <property type="nucleotide sequence ID" value="NZ_CP155539.1"/>
</dbReference>
<dbReference type="SMR" id="P65887"/>
<dbReference type="IntAct" id="P65887">
    <property type="interactions" value="6"/>
</dbReference>
<dbReference type="PaxDb" id="170187-SP_0019"/>
<dbReference type="EnsemblBacteria" id="AAK74211">
    <property type="protein sequence ID" value="AAK74211"/>
    <property type="gene ID" value="SP_0019"/>
</dbReference>
<dbReference type="KEGG" id="spn:SP_0019"/>
<dbReference type="eggNOG" id="COG0104">
    <property type="taxonomic scope" value="Bacteria"/>
</dbReference>
<dbReference type="PhylomeDB" id="P65887"/>
<dbReference type="BioCyc" id="SPNE170187:G1FZB-23-MONOMER"/>
<dbReference type="UniPathway" id="UPA00075">
    <property type="reaction ID" value="UER00335"/>
</dbReference>
<dbReference type="Proteomes" id="UP000000585">
    <property type="component" value="Chromosome"/>
</dbReference>
<dbReference type="GO" id="GO:0005737">
    <property type="term" value="C:cytoplasm"/>
    <property type="evidence" value="ECO:0007669"/>
    <property type="project" value="UniProtKB-SubCell"/>
</dbReference>
<dbReference type="GO" id="GO:0004019">
    <property type="term" value="F:adenylosuccinate synthase activity"/>
    <property type="evidence" value="ECO:0007669"/>
    <property type="project" value="UniProtKB-UniRule"/>
</dbReference>
<dbReference type="GO" id="GO:0005525">
    <property type="term" value="F:GTP binding"/>
    <property type="evidence" value="ECO:0007669"/>
    <property type="project" value="UniProtKB-UniRule"/>
</dbReference>
<dbReference type="GO" id="GO:0000287">
    <property type="term" value="F:magnesium ion binding"/>
    <property type="evidence" value="ECO:0007669"/>
    <property type="project" value="UniProtKB-UniRule"/>
</dbReference>
<dbReference type="GO" id="GO:0044208">
    <property type="term" value="P:'de novo' AMP biosynthetic process"/>
    <property type="evidence" value="ECO:0007669"/>
    <property type="project" value="UniProtKB-UniRule"/>
</dbReference>
<dbReference type="GO" id="GO:0046040">
    <property type="term" value="P:IMP metabolic process"/>
    <property type="evidence" value="ECO:0007669"/>
    <property type="project" value="TreeGrafter"/>
</dbReference>
<dbReference type="CDD" id="cd03108">
    <property type="entry name" value="AdSS"/>
    <property type="match status" value="1"/>
</dbReference>
<dbReference type="FunFam" id="1.10.300.10:FF:000001">
    <property type="entry name" value="Adenylosuccinate synthetase"/>
    <property type="match status" value="1"/>
</dbReference>
<dbReference type="FunFam" id="3.90.170.10:FF:000001">
    <property type="entry name" value="Adenylosuccinate synthetase"/>
    <property type="match status" value="1"/>
</dbReference>
<dbReference type="Gene3D" id="3.40.440.10">
    <property type="entry name" value="Adenylosuccinate Synthetase, subunit A, domain 1"/>
    <property type="match status" value="1"/>
</dbReference>
<dbReference type="Gene3D" id="1.10.300.10">
    <property type="entry name" value="Adenylosuccinate Synthetase, subunit A, domain 2"/>
    <property type="match status" value="1"/>
</dbReference>
<dbReference type="Gene3D" id="3.90.170.10">
    <property type="entry name" value="Adenylosuccinate Synthetase, subunit A, domain 3"/>
    <property type="match status" value="1"/>
</dbReference>
<dbReference type="HAMAP" id="MF_00011">
    <property type="entry name" value="Adenylosucc_synth"/>
    <property type="match status" value="1"/>
</dbReference>
<dbReference type="InterPro" id="IPR018220">
    <property type="entry name" value="Adenylosuccin_syn_GTP-bd"/>
</dbReference>
<dbReference type="InterPro" id="IPR033128">
    <property type="entry name" value="Adenylosuccin_syn_Lys_AS"/>
</dbReference>
<dbReference type="InterPro" id="IPR042109">
    <property type="entry name" value="Adenylosuccinate_synth_dom1"/>
</dbReference>
<dbReference type="InterPro" id="IPR042110">
    <property type="entry name" value="Adenylosuccinate_synth_dom2"/>
</dbReference>
<dbReference type="InterPro" id="IPR042111">
    <property type="entry name" value="Adenylosuccinate_synth_dom3"/>
</dbReference>
<dbReference type="InterPro" id="IPR001114">
    <property type="entry name" value="Adenylosuccinate_synthetase"/>
</dbReference>
<dbReference type="InterPro" id="IPR027417">
    <property type="entry name" value="P-loop_NTPase"/>
</dbReference>
<dbReference type="NCBIfam" id="NF002223">
    <property type="entry name" value="PRK01117.1"/>
    <property type="match status" value="1"/>
</dbReference>
<dbReference type="NCBIfam" id="TIGR00184">
    <property type="entry name" value="purA"/>
    <property type="match status" value="1"/>
</dbReference>
<dbReference type="PANTHER" id="PTHR11846">
    <property type="entry name" value="ADENYLOSUCCINATE SYNTHETASE"/>
    <property type="match status" value="1"/>
</dbReference>
<dbReference type="PANTHER" id="PTHR11846:SF0">
    <property type="entry name" value="ADENYLOSUCCINATE SYNTHETASE"/>
    <property type="match status" value="1"/>
</dbReference>
<dbReference type="Pfam" id="PF00709">
    <property type="entry name" value="Adenylsucc_synt"/>
    <property type="match status" value="1"/>
</dbReference>
<dbReference type="SMART" id="SM00788">
    <property type="entry name" value="Adenylsucc_synt"/>
    <property type="match status" value="1"/>
</dbReference>
<dbReference type="SUPFAM" id="SSF52540">
    <property type="entry name" value="P-loop containing nucleoside triphosphate hydrolases"/>
    <property type="match status" value="1"/>
</dbReference>
<dbReference type="PROSITE" id="PS01266">
    <property type="entry name" value="ADENYLOSUCCIN_SYN_1"/>
    <property type="match status" value="1"/>
</dbReference>
<dbReference type="PROSITE" id="PS00513">
    <property type="entry name" value="ADENYLOSUCCIN_SYN_2"/>
    <property type="match status" value="1"/>
</dbReference>
<gene>
    <name evidence="1" type="primary">purA</name>
    <name type="ordered locus">SP_0019</name>
</gene>
<comment type="function">
    <text evidence="1">Plays an important role in the de novo pathway of purine nucleotide biosynthesis. Catalyzes the first committed step in the biosynthesis of AMP from IMP.</text>
</comment>
<comment type="catalytic activity">
    <reaction evidence="1">
        <text>IMP + L-aspartate + GTP = N(6)-(1,2-dicarboxyethyl)-AMP + GDP + phosphate + 2 H(+)</text>
        <dbReference type="Rhea" id="RHEA:15753"/>
        <dbReference type="ChEBI" id="CHEBI:15378"/>
        <dbReference type="ChEBI" id="CHEBI:29991"/>
        <dbReference type="ChEBI" id="CHEBI:37565"/>
        <dbReference type="ChEBI" id="CHEBI:43474"/>
        <dbReference type="ChEBI" id="CHEBI:57567"/>
        <dbReference type="ChEBI" id="CHEBI:58053"/>
        <dbReference type="ChEBI" id="CHEBI:58189"/>
        <dbReference type="EC" id="6.3.4.4"/>
    </reaction>
</comment>
<comment type="cofactor">
    <cofactor evidence="1">
        <name>Mg(2+)</name>
        <dbReference type="ChEBI" id="CHEBI:18420"/>
    </cofactor>
    <text evidence="1">Binds 1 Mg(2+) ion per subunit.</text>
</comment>
<comment type="pathway">
    <text evidence="1">Purine metabolism; AMP biosynthesis via de novo pathway; AMP from IMP: step 1/2.</text>
</comment>
<comment type="subunit">
    <text evidence="1">Homodimer.</text>
</comment>
<comment type="interaction">
    <interactant intactId="EBI-2206955">
        <id>P65887</id>
    </interactant>
    <interactant intactId="EBI-2207079">
        <id>P95830</id>
        <label>dnaJ</label>
    </interactant>
    <organismsDiffer>false</organismsDiffer>
    <experiments>2</experiments>
</comment>
<comment type="interaction">
    <interactant intactId="EBI-2206955">
        <id>P65887</id>
    </interactant>
    <interactant intactId="EBI-2207206">
        <id>Q97QS2</id>
        <label>eno</label>
    </interactant>
    <organismsDiffer>false</organismsDiffer>
    <experiments>2</experiments>
</comment>
<comment type="interaction">
    <interactant intactId="EBI-2206955">
        <id>P65887</id>
    </interactant>
    <interactant intactId="EBI-2206949">
        <id>Q97NV3</id>
        <label>groES</label>
    </interactant>
    <organismsDiffer>false</organismsDiffer>
    <experiments>2</experiments>
</comment>
<comment type="interaction">
    <interactant intactId="EBI-2206955">
        <id>P65887</id>
    </interactant>
    <interactant intactId="EBI-2207065">
        <id>Q97S73</id>
        <label>grpE</label>
    </interactant>
    <organismsDiffer>false</organismsDiffer>
    <experiments>2</experiments>
</comment>
<comment type="interaction">
    <interactant intactId="EBI-2206955">
        <id>P65887</id>
    </interactant>
    <interactant intactId="EBI-2207109">
        <id>P0CB75</id>
        <label>pyrF</label>
    </interactant>
    <organismsDiffer>false</organismsDiffer>
    <experiments>2</experiments>
</comment>
<comment type="interaction">
    <interactant intactId="EBI-2206955">
        <id>P65887</id>
    </interactant>
    <interactant intactId="EBI-2206983">
        <id>Q97SR4</id>
        <label>uppS</label>
    </interactant>
    <organismsDiffer>false</organismsDiffer>
    <experiments>2</experiments>
</comment>
<comment type="subcellular location">
    <subcellularLocation>
        <location evidence="1">Cytoplasm</location>
    </subcellularLocation>
</comment>
<comment type="similarity">
    <text evidence="1">Belongs to the adenylosuccinate synthetase family.</text>
</comment>
<reference key="1">
    <citation type="journal article" date="2001" name="Science">
        <title>Complete genome sequence of a virulent isolate of Streptococcus pneumoniae.</title>
        <authorList>
            <person name="Tettelin H."/>
            <person name="Nelson K.E."/>
            <person name="Paulsen I.T."/>
            <person name="Eisen J.A."/>
            <person name="Read T.D."/>
            <person name="Peterson S.N."/>
            <person name="Heidelberg J.F."/>
            <person name="DeBoy R.T."/>
            <person name="Haft D.H."/>
            <person name="Dodson R.J."/>
            <person name="Durkin A.S."/>
            <person name="Gwinn M.L."/>
            <person name="Kolonay J.F."/>
            <person name="Nelson W.C."/>
            <person name="Peterson J.D."/>
            <person name="Umayam L.A."/>
            <person name="White O."/>
            <person name="Salzberg S.L."/>
            <person name="Lewis M.R."/>
            <person name="Radune D."/>
            <person name="Holtzapple E.K."/>
            <person name="Khouri H.M."/>
            <person name="Wolf A.M."/>
            <person name="Utterback T.R."/>
            <person name="Hansen C.L."/>
            <person name="McDonald L.A."/>
            <person name="Feldblyum T.V."/>
            <person name="Angiuoli S.V."/>
            <person name="Dickinson T."/>
            <person name="Hickey E.K."/>
            <person name="Holt I.E."/>
            <person name="Loftus B.J."/>
            <person name="Yang F."/>
            <person name="Smith H.O."/>
            <person name="Venter J.C."/>
            <person name="Dougherty B.A."/>
            <person name="Morrison D.A."/>
            <person name="Hollingshead S.K."/>
            <person name="Fraser C.M."/>
        </authorList>
    </citation>
    <scope>NUCLEOTIDE SEQUENCE [LARGE SCALE GENOMIC DNA]</scope>
    <source>
        <strain>ATCC BAA-334 / TIGR4</strain>
    </source>
</reference>
<evidence type="ECO:0000255" key="1">
    <source>
        <dbReference type="HAMAP-Rule" id="MF_00011"/>
    </source>
</evidence>
<feature type="chain" id="PRO_0000095239" description="Adenylosuccinate synthetase">
    <location>
        <begin position="1"/>
        <end position="428"/>
    </location>
</feature>
<feature type="active site" description="Proton acceptor" evidence="1">
    <location>
        <position position="13"/>
    </location>
</feature>
<feature type="active site" description="Proton donor" evidence="1">
    <location>
        <position position="41"/>
    </location>
</feature>
<feature type="binding site" evidence="1">
    <location>
        <begin position="12"/>
        <end position="18"/>
    </location>
    <ligand>
        <name>GTP</name>
        <dbReference type="ChEBI" id="CHEBI:37565"/>
    </ligand>
</feature>
<feature type="binding site" description="in other chain" evidence="1">
    <location>
        <begin position="13"/>
        <end position="16"/>
    </location>
    <ligand>
        <name>IMP</name>
        <dbReference type="ChEBI" id="CHEBI:58053"/>
        <note>ligand shared between dimeric partners</note>
    </ligand>
</feature>
<feature type="binding site" evidence="1">
    <location>
        <position position="13"/>
    </location>
    <ligand>
        <name>Mg(2+)</name>
        <dbReference type="ChEBI" id="CHEBI:18420"/>
    </ligand>
</feature>
<feature type="binding site" description="in other chain" evidence="1">
    <location>
        <begin position="38"/>
        <end position="41"/>
    </location>
    <ligand>
        <name>IMP</name>
        <dbReference type="ChEBI" id="CHEBI:58053"/>
        <note>ligand shared between dimeric partners</note>
    </ligand>
</feature>
<feature type="binding site" evidence="1">
    <location>
        <begin position="40"/>
        <end position="42"/>
    </location>
    <ligand>
        <name>GTP</name>
        <dbReference type="ChEBI" id="CHEBI:37565"/>
    </ligand>
</feature>
<feature type="binding site" evidence="1">
    <location>
        <position position="40"/>
    </location>
    <ligand>
        <name>Mg(2+)</name>
        <dbReference type="ChEBI" id="CHEBI:18420"/>
    </ligand>
</feature>
<feature type="binding site" description="in other chain" evidence="1">
    <location>
        <position position="128"/>
    </location>
    <ligand>
        <name>IMP</name>
        <dbReference type="ChEBI" id="CHEBI:58053"/>
        <note>ligand shared between dimeric partners</note>
    </ligand>
</feature>
<feature type="binding site" evidence="1">
    <location>
        <position position="142"/>
    </location>
    <ligand>
        <name>IMP</name>
        <dbReference type="ChEBI" id="CHEBI:58053"/>
        <note>ligand shared between dimeric partners</note>
    </ligand>
</feature>
<feature type="binding site" description="in other chain" evidence="1">
    <location>
        <position position="223"/>
    </location>
    <ligand>
        <name>IMP</name>
        <dbReference type="ChEBI" id="CHEBI:58053"/>
        <note>ligand shared between dimeric partners</note>
    </ligand>
</feature>
<feature type="binding site" description="in other chain" evidence="1">
    <location>
        <position position="238"/>
    </location>
    <ligand>
        <name>IMP</name>
        <dbReference type="ChEBI" id="CHEBI:58053"/>
        <note>ligand shared between dimeric partners</note>
    </ligand>
</feature>
<feature type="binding site" evidence="1">
    <location>
        <begin position="298"/>
        <end position="304"/>
    </location>
    <ligand>
        <name>substrate</name>
    </ligand>
</feature>
<feature type="binding site" description="in other chain" evidence="1">
    <location>
        <position position="302"/>
    </location>
    <ligand>
        <name>IMP</name>
        <dbReference type="ChEBI" id="CHEBI:58053"/>
        <note>ligand shared between dimeric partners</note>
    </ligand>
</feature>
<feature type="binding site" evidence="1">
    <location>
        <position position="304"/>
    </location>
    <ligand>
        <name>GTP</name>
        <dbReference type="ChEBI" id="CHEBI:37565"/>
    </ligand>
</feature>
<feature type="binding site" evidence="1">
    <location>
        <begin position="330"/>
        <end position="332"/>
    </location>
    <ligand>
        <name>GTP</name>
        <dbReference type="ChEBI" id="CHEBI:37565"/>
    </ligand>
</feature>
<feature type="binding site" evidence="1">
    <location>
        <begin position="412"/>
        <end position="414"/>
    </location>
    <ligand>
        <name>GTP</name>
        <dbReference type="ChEBI" id="CHEBI:37565"/>
    </ligand>
</feature>